<keyword id="KW-0143">Chaperone</keyword>
<keyword id="KW-0963">Cytoplasm</keyword>
<keyword id="KW-0690">Ribosome biogenesis</keyword>
<keyword id="KW-0698">rRNA processing</keyword>
<evidence type="ECO:0000255" key="1">
    <source>
        <dbReference type="HAMAP-Rule" id="MF_00014"/>
    </source>
</evidence>
<comment type="function">
    <text evidence="1">An accessory protein needed during the final step in the assembly of 30S ribosomal subunit, possibly for assembly of the head region. Essential for efficient processing of 16S rRNA. May be needed both before and after RbfA during the maturation of 16S rRNA. It has affinity for free ribosomal 30S subunits but not for 70S ribosomes.</text>
</comment>
<comment type="subunit">
    <text evidence="1">Binds ribosomal protein uS19.</text>
</comment>
<comment type="subcellular location">
    <subcellularLocation>
        <location evidence="1">Cytoplasm</location>
    </subcellularLocation>
</comment>
<comment type="domain">
    <text evidence="1">The PRC barrel domain binds ribosomal protein uS19.</text>
</comment>
<comment type="similarity">
    <text evidence="1">Belongs to the RimM family.</text>
</comment>
<name>RIMM_LISMC</name>
<reference key="1">
    <citation type="journal article" date="2012" name="BMC Genomics">
        <title>Comparative genomics and transcriptomics of lineages I, II, and III strains of Listeria monocytogenes.</title>
        <authorList>
            <person name="Hain T."/>
            <person name="Ghai R."/>
            <person name="Billion A."/>
            <person name="Kuenne C.T."/>
            <person name="Steinweg C."/>
            <person name="Izar B."/>
            <person name="Mohamed W."/>
            <person name="Mraheil M."/>
            <person name="Domann E."/>
            <person name="Schaffrath S."/>
            <person name="Karst U."/>
            <person name="Goesmann A."/>
            <person name="Oehm S."/>
            <person name="Puhler A."/>
            <person name="Merkl R."/>
            <person name="Vorwerk S."/>
            <person name="Glaser P."/>
            <person name="Garrido P."/>
            <person name="Rusniok C."/>
            <person name="Buchrieser C."/>
            <person name="Goebel W."/>
            <person name="Chakraborty T."/>
        </authorList>
    </citation>
    <scope>NUCLEOTIDE SEQUENCE [LARGE SCALE GENOMIC DNA]</scope>
    <source>
        <strain>CLIP80459</strain>
    </source>
</reference>
<dbReference type="EMBL" id="FM242711">
    <property type="protein sequence ID" value="CAS05567.1"/>
    <property type="molecule type" value="Genomic_DNA"/>
</dbReference>
<dbReference type="RefSeq" id="WP_012681345.1">
    <property type="nucleotide sequence ID" value="NC_012488.1"/>
</dbReference>
<dbReference type="SMR" id="C1KW92"/>
<dbReference type="KEGG" id="lmc:Lm4b_01809"/>
<dbReference type="HOGENOM" id="CLU_077636_3_1_9"/>
<dbReference type="GO" id="GO:0005737">
    <property type="term" value="C:cytoplasm"/>
    <property type="evidence" value="ECO:0007669"/>
    <property type="project" value="UniProtKB-SubCell"/>
</dbReference>
<dbReference type="GO" id="GO:0005840">
    <property type="term" value="C:ribosome"/>
    <property type="evidence" value="ECO:0007669"/>
    <property type="project" value="InterPro"/>
</dbReference>
<dbReference type="GO" id="GO:0043022">
    <property type="term" value="F:ribosome binding"/>
    <property type="evidence" value="ECO:0007669"/>
    <property type="project" value="InterPro"/>
</dbReference>
<dbReference type="GO" id="GO:0042274">
    <property type="term" value="P:ribosomal small subunit biogenesis"/>
    <property type="evidence" value="ECO:0007669"/>
    <property type="project" value="UniProtKB-UniRule"/>
</dbReference>
<dbReference type="GO" id="GO:0006364">
    <property type="term" value="P:rRNA processing"/>
    <property type="evidence" value="ECO:0007669"/>
    <property type="project" value="UniProtKB-UniRule"/>
</dbReference>
<dbReference type="Gene3D" id="2.30.30.240">
    <property type="entry name" value="PRC-barrel domain"/>
    <property type="match status" value="1"/>
</dbReference>
<dbReference type="Gene3D" id="2.40.30.60">
    <property type="entry name" value="RimM"/>
    <property type="match status" value="1"/>
</dbReference>
<dbReference type="HAMAP" id="MF_00014">
    <property type="entry name" value="Ribosome_mat_RimM"/>
    <property type="match status" value="1"/>
</dbReference>
<dbReference type="InterPro" id="IPR027275">
    <property type="entry name" value="PRC-brl_dom"/>
</dbReference>
<dbReference type="InterPro" id="IPR011033">
    <property type="entry name" value="PRC_barrel-like_sf"/>
</dbReference>
<dbReference type="InterPro" id="IPR011961">
    <property type="entry name" value="RimM"/>
</dbReference>
<dbReference type="InterPro" id="IPR002676">
    <property type="entry name" value="RimM_N"/>
</dbReference>
<dbReference type="InterPro" id="IPR036976">
    <property type="entry name" value="RimM_N_sf"/>
</dbReference>
<dbReference type="InterPro" id="IPR009000">
    <property type="entry name" value="Transl_B-barrel_sf"/>
</dbReference>
<dbReference type="NCBIfam" id="TIGR02273">
    <property type="entry name" value="16S_RimM"/>
    <property type="match status" value="1"/>
</dbReference>
<dbReference type="PANTHER" id="PTHR33692">
    <property type="entry name" value="RIBOSOME MATURATION FACTOR RIMM"/>
    <property type="match status" value="1"/>
</dbReference>
<dbReference type="PANTHER" id="PTHR33692:SF1">
    <property type="entry name" value="RIBOSOME MATURATION FACTOR RIMM"/>
    <property type="match status" value="1"/>
</dbReference>
<dbReference type="Pfam" id="PF05239">
    <property type="entry name" value="PRC"/>
    <property type="match status" value="1"/>
</dbReference>
<dbReference type="Pfam" id="PF01782">
    <property type="entry name" value="RimM"/>
    <property type="match status" value="1"/>
</dbReference>
<dbReference type="SUPFAM" id="SSF50346">
    <property type="entry name" value="PRC-barrel domain"/>
    <property type="match status" value="1"/>
</dbReference>
<dbReference type="SUPFAM" id="SSF50447">
    <property type="entry name" value="Translation proteins"/>
    <property type="match status" value="1"/>
</dbReference>
<accession>C1KW92</accession>
<feature type="chain" id="PRO_1000201809" description="Ribosome maturation factor RimM">
    <location>
        <begin position="1"/>
        <end position="172"/>
    </location>
</feature>
<feature type="domain" description="PRC barrel" evidence="1">
    <location>
        <begin position="96"/>
        <end position="170"/>
    </location>
</feature>
<gene>
    <name evidence="1" type="primary">rimM</name>
    <name type="ordered locus">Lm4b_01809</name>
</gene>
<protein>
    <recommendedName>
        <fullName evidence="1">Ribosome maturation factor RimM</fullName>
    </recommendedName>
</protein>
<sequence length="172" mass="19750">MEKMYNVGKIVNTHGLIGEIRVIATTDFPEERFQVGNTVYLFEKNSKKPEKLIIRSHRKHKNFDLLMFEGFTGIHQVERMKEGVLKIKEAQLTDLEENEFYFHEIIGCIVVTTDGKELGEITEILTPGANDVWVVKGSDKKEKLIPYIADVVKEININDKKITIEVMEGLLD</sequence>
<proteinExistence type="inferred from homology"/>
<organism>
    <name type="scientific">Listeria monocytogenes serotype 4b (strain CLIP80459)</name>
    <dbReference type="NCBI Taxonomy" id="568819"/>
    <lineage>
        <taxon>Bacteria</taxon>
        <taxon>Bacillati</taxon>
        <taxon>Bacillota</taxon>
        <taxon>Bacilli</taxon>
        <taxon>Bacillales</taxon>
        <taxon>Listeriaceae</taxon>
        <taxon>Listeria</taxon>
    </lineage>
</organism>